<comment type="function">
    <text evidence="1">Catalyzes the NADPH-dependent reduction of glutamyl-tRNA(Glu) to glutamate 1-semialdehyde (GSA).</text>
</comment>
<comment type="catalytic activity">
    <reaction evidence="1">
        <text>(S)-4-amino-5-oxopentanoate + tRNA(Glu) + NADP(+) = L-glutamyl-tRNA(Glu) + NADPH + H(+)</text>
        <dbReference type="Rhea" id="RHEA:12344"/>
        <dbReference type="Rhea" id="RHEA-COMP:9663"/>
        <dbReference type="Rhea" id="RHEA-COMP:9680"/>
        <dbReference type="ChEBI" id="CHEBI:15378"/>
        <dbReference type="ChEBI" id="CHEBI:57501"/>
        <dbReference type="ChEBI" id="CHEBI:57783"/>
        <dbReference type="ChEBI" id="CHEBI:58349"/>
        <dbReference type="ChEBI" id="CHEBI:78442"/>
        <dbReference type="ChEBI" id="CHEBI:78520"/>
        <dbReference type="EC" id="1.2.1.70"/>
    </reaction>
</comment>
<comment type="pathway">
    <text evidence="1">Porphyrin-containing compound metabolism; protoporphyrin-IX biosynthesis; 5-aminolevulinate from L-glutamyl-tRNA(Glu): step 1/2.</text>
</comment>
<comment type="subunit">
    <text evidence="1">Homodimer.</text>
</comment>
<comment type="domain">
    <text evidence="1">Possesses an unusual extended V-shaped dimeric structure with each monomer consisting of three distinct domains arranged along a curved 'spinal' alpha-helix. The N-terminal catalytic domain specifically recognizes the glutamate moiety of the substrate. The second domain is the NADPH-binding domain, and the third C-terminal domain is responsible for dimerization.</text>
</comment>
<comment type="miscellaneous">
    <text evidence="1">During catalysis, the active site Cys acts as a nucleophile attacking the alpha-carbonyl group of tRNA-bound glutamate with the formation of a thioester intermediate between enzyme and glutamate, and the concomitant release of tRNA(Glu). The thioester intermediate is finally reduced by direct hydride transfer from NADPH, to form the product GSA.</text>
</comment>
<comment type="similarity">
    <text evidence="1">Belongs to the glutamyl-tRNA reductase family.</text>
</comment>
<gene>
    <name evidence="1" type="primary">hemA</name>
    <name type="ordered locus">CTA_0719</name>
</gene>
<feature type="chain" id="PRO_1000004609" description="Glutamyl-tRNA reductase">
    <location>
        <begin position="1"/>
        <end position="335"/>
    </location>
</feature>
<feature type="active site" description="Nucleophile" evidence="1">
    <location>
        <position position="61"/>
    </location>
</feature>
<feature type="binding site" evidence="1">
    <location>
        <begin position="60"/>
        <end position="63"/>
    </location>
    <ligand>
        <name>substrate</name>
    </ligand>
</feature>
<feature type="binding site" evidence="1">
    <location>
        <position position="110"/>
    </location>
    <ligand>
        <name>substrate</name>
    </ligand>
</feature>
<feature type="binding site" evidence="1">
    <location>
        <begin position="115"/>
        <end position="117"/>
    </location>
    <ligand>
        <name>substrate</name>
    </ligand>
</feature>
<feature type="binding site" evidence="1">
    <location>
        <position position="121"/>
    </location>
    <ligand>
        <name>substrate</name>
    </ligand>
</feature>
<feature type="binding site" evidence="1">
    <location>
        <begin position="189"/>
        <end position="194"/>
    </location>
    <ligand>
        <name>NADP(+)</name>
        <dbReference type="ChEBI" id="CHEBI:58349"/>
    </ligand>
</feature>
<feature type="site" description="Important for activity" evidence="1">
    <location>
        <position position="100"/>
    </location>
</feature>
<name>HEM1_CHLTA</name>
<evidence type="ECO:0000255" key="1">
    <source>
        <dbReference type="HAMAP-Rule" id="MF_00087"/>
    </source>
</evidence>
<keyword id="KW-0521">NADP</keyword>
<keyword id="KW-0560">Oxidoreductase</keyword>
<keyword id="KW-0627">Porphyrin biosynthesis</keyword>
<proteinExistence type="inferred from homology"/>
<dbReference type="EC" id="1.2.1.70" evidence="1"/>
<dbReference type="EMBL" id="CP000051">
    <property type="protein sequence ID" value="AAX50940.1"/>
    <property type="molecule type" value="Genomic_DNA"/>
</dbReference>
<dbReference type="RefSeq" id="WP_011324812.1">
    <property type="nucleotide sequence ID" value="NC_007429.1"/>
</dbReference>
<dbReference type="SMR" id="Q3KL32"/>
<dbReference type="KEGG" id="cta:CTA_0719"/>
<dbReference type="HOGENOM" id="CLU_035113_3_1_0"/>
<dbReference type="UniPathway" id="UPA00251">
    <property type="reaction ID" value="UER00316"/>
</dbReference>
<dbReference type="Proteomes" id="UP000002532">
    <property type="component" value="Chromosome"/>
</dbReference>
<dbReference type="GO" id="GO:0008883">
    <property type="term" value="F:glutamyl-tRNA reductase activity"/>
    <property type="evidence" value="ECO:0007669"/>
    <property type="project" value="UniProtKB-UniRule"/>
</dbReference>
<dbReference type="GO" id="GO:0050661">
    <property type="term" value="F:NADP binding"/>
    <property type="evidence" value="ECO:0007669"/>
    <property type="project" value="InterPro"/>
</dbReference>
<dbReference type="GO" id="GO:0006782">
    <property type="term" value="P:protoporphyrinogen IX biosynthetic process"/>
    <property type="evidence" value="ECO:0007669"/>
    <property type="project" value="UniProtKB-UniRule"/>
</dbReference>
<dbReference type="Gene3D" id="3.30.460.30">
    <property type="entry name" value="Glutamyl-tRNA reductase, N-terminal domain"/>
    <property type="match status" value="1"/>
</dbReference>
<dbReference type="HAMAP" id="MF_00087">
    <property type="entry name" value="Glu_tRNA_reductase"/>
    <property type="match status" value="1"/>
</dbReference>
<dbReference type="InterPro" id="IPR000343">
    <property type="entry name" value="4pyrrol_synth_GluRdtase"/>
</dbReference>
<dbReference type="InterPro" id="IPR015895">
    <property type="entry name" value="4pyrrol_synth_GluRdtase_N"/>
</dbReference>
<dbReference type="InterPro" id="IPR018214">
    <property type="entry name" value="GluRdtase_CS"/>
</dbReference>
<dbReference type="InterPro" id="IPR036343">
    <property type="entry name" value="GluRdtase_N_sf"/>
</dbReference>
<dbReference type="NCBIfam" id="NF001909">
    <property type="entry name" value="PRK00676.1"/>
    <property type="match status" value="1"/>
</dbReference>
<dbReference type="PANTHER" id="PTHR43120">
    <property type="entry name" value="GLUTAMYL-TRNA REDUCTASE 1, CHLOROPLASTIC"/>
    <property type="match status" value="1"/>
</dbReference>
<dbReference type="PANTHER" id="PTHR43120:SF1">
    <property type="entry name" value="GLUTAMYL-TRNA REDUCTASE 1, CHLOROPLASTIC"/>
    <property type="match status" value="1"/>
</dbReference>
<dbReference type="Pfam" id="PF05201">
    <property type="entry name" value="GlutR_N"/>
    <property type="match status" value="1"/>
</dbReference>
<dbReference type="SUPFAM" id="SSF69742">
    <property type="entry name" value="Glutamyl tRNA-reductase catalytic, N-terminal domain"/>
    <property type="match status" value="1"/>
</dbReference>
<dbReference type="PROSITE" id="PS00747">
    <property type="entry name" value="GLUTR"/>
    <property type="match status" value="1"/>
</dbReference>
<accession>Q3KL32</accession>
<reference key="1">
    <citation type="journal article" date="2005" name="Infect. Immun.">
        <title>Comparative genomic analysis of Chlamydia trachomatis oculotropic and genitotropic strains.</title>
        <authorList>
            <person name="Carlson J.H."/>
            <person name="Porcella S.F."/>
            <person name="McClarty G."/>
            <person name="Caldwell H.D."/>
        </authorList>
    </citation>
    <scope>NUCLEOTIDE SEQUENCE [LARGE SCALE GENOMIC DNA]</scope>
    <source>
        <strain>ATCC VR-571B / DSM 19440 / HAR-13</strain>
    </source>
</reference>
<organism>
    <name type="scientific">Chlamydia trachomatis serovar A (strain ATCC VR-571B / DSM 19440 / HAR-13)</name>
    <dbReference type="NCBI Taxonomy" id="315277"/>
    <lineage>
        <taxon>Bacteria</taxon>
        <taxon>Pseudomonadati</taxon>
        <taxon>Chlamydiota</taxon>
        <taxon>Chlamydiia</taxon>
        <taxon>Chlamydiales</taxon>
        <taxon>Chlamydiaceae</taxon>
        <taxon>Chlamydia/Chlamydophila group</taxon>
        <taxon>Chlamydia</taxon>
    </lineage>
</organism>
<sequence length="335" mass="38843">MVREGEERIGNRVSLGVIGVSYRETTLQQREQVLHILQQAQGSFRLEVFQEEKDYVLLATCHRVELYSVAPAELFDSLAQEIELLGVSPYFYRNQDCFAHLFCVAGGLDSLVLGETEIQGQVKRAYLQAAREQKLSFALHFLFQKALKEGKVFRAKGGAPYAEITIPILVDQELRRRQIDKKASLLFIGYSEINRSVAYHLQRQGFSCITFCSRQQLPTLSMRQVVREELCFQDPYRVVFLGSSELQYALPHSLWESIWDIPDRIVFDFAVPRALPSHTVFPHRYVDMDQISDWLREHRKEVNSAHLHSLREVAYRYWNSLNQRLERRDCVGANA</sequence>
<protein>
    <recommendedName>
        <fullName evidence="1">Glutamyl-tRNA reductase</fullName>
        <shortName evidence="1">GluTR</shortName>
        <ecNumber evidence="1">1.2.1.70</ecNumber>
    </recommendedName>
</protein>